<proteinExistence type="inferred from homology"/>
<gene>
    <name type="primary">abcD1</name>
    <name type="ORF">DDB_G0279917</name>
</gene>
<sequence>MKTTNVKNNNNNINNTDEEIKIKNNYNQNDERLKKIKENKFDWALFKRFINIIKILYAKPVIPLTLFLILFGNGFAQTYVSKFTGILLADIYASFTSGDKVFFLSSVLKAGFAIGGSALLAAIINFIVSIMAWNWRKTLCLYIQNVYFKKSLFYKILAFDDRIDNPDQRITSDIDNFTTLLASIVSQCITGPMVVVYYTYLCYTTIDWYAPLIVYGFFFLGYLINKLVMSPMVSINYLQDKLEGDFRSLHQRIRNFSESIALYSLSKEKQHPEKRFDNNDYDHGYESDDSDQSCDESTTIINRKKNKGSQYYKNKNSTSKKINDFIDKLSGDSNDQKEELLVEEEQAKIQFEALLKNKKRVIFWQLGLNTTSDLFTYLSPIANYFIIAIPVFFLNNKSVLQPGDVTVQSYNCIMLASGFSQYINVSQSISDLSGYISRISSMIEVCKKIMEDVSLDADITKLNEKVAQTHNNDAIINTGSSGNISLNNGDSITLDDVTYFTPKGNQLYSKISINVKRGNNLLIMGPSGSGKSSLIRIINGLWPFFKGSIDRPENGDMFFLPQQPYLIFGTLEEQILYPFSKKQKRIPKSIMRELFQRFEIDYLLDRERFIKKSAQVNDLTHNWLNQLSPGEQQLIAIIRLIYHKPKFALMDESTSSIPQSLEERVYYVAKELGITIISVGHRISLLKYHSTLLRFDKDKNWYLEDIINQNNQSNNINNNNNNNTNKIAEDSVFD</sequence>
<reference key="1">
    <citation type="journal article" date="2005" name="Nature">
        <title>The genome of the social amoeba Dictyostelium discoideum.</title>
        <authorList>
            <person name="Eichinger L."/>
            <person name="Pachebat J.A."/>
            <person name="Gloeckner G."/>
            <person name="Rajandream M.A."/>
            <person name="Sucgang R."/>
            <person name="Berriman M."/>
            <person name="Song J."/>
            <person name="Olsen R."/>
            <person name="Szafranski K."/>
            <person name="Xu Q."/>
            <person name="Tunggal B."/>
            <person name="Kummerfeld S."/>
            <person name="Madera M."/>
            <person name="Konfortov B.A."/>
            <person name="Rivero F."/>
            <person name="Bankier A.T."/>
            <person name="Lehmann R."/>
            <person name="Hamlin N."/>
            <person name="Davies R."/>
            <person name="Gaudet P."/>
            <person name="Fey P."/>
            <person name="Pilcher K."/>
            <person name="Chen G."/>
            <person name="Saunders D."/>
            <person name="Sodergren E.J."/>
            <person name="Davis P."/>
            <person name="Kerhornou A."/>
            <person name="Nie X."/>
            <person name="Hall N."/>
            <person name="Anjard C."/>
            <person name="Hemphill L."/>
            <person name="Bason N."/>
            <person name="Farbrother P."/>
            <person name="Desany B."/>
            <person name="Just E."/>
            <person name="Morio T."/>
            <person name="Rost R."/>
            <person name="Churcher C.M."/>
            <person name="Cooper J."/>
            <person name="Haydock S."/>
            <person name="van Driessche N."/>
            <person name="Cronin A."/>
            <person name="Goodhead I."/>
            <person name="Muzny D.M."/>
            <person name="Mourier T."/>
            <person name="Pain A."/>
            <person name="Lu M."/>
            <person name="Harper D."/>
            <person name="Lindsay R."/>
            <person name="Hauser H."/>
            <person name="James K.D."/>
            <person name="Quiles M."/>
            <person name="Madan Babu M."/>
            <person name="Saito T."/>
            <person name="Buchrieser C."/>
            <person name="Wardroper A."/>
            <person name="Felder M."/>
            <person name="Thangavelu M."/>
            <person name="Johnson D."/>
            <person name="Knights A."/>
            <person name="Loulseged H."/>
            <person name="Mungall K.L."/>
            <person name="Oliver K."/>
            <person name="Price C."/>
            <person name="Quail M.A."/>
            <person name="Urushihara H."/>
            <person name="Hernandez J."/>
            <person name="Rabbinowitsch E."/>
            <person name="Steffen D."/>
            <person name="Sanders M."/>
            <person name="Ma J."/>
            <person name="Kohara Y."/>
            <person name="Sharp S."/>
            <person name="Simmonds M.N."/>
            <person name="Spiegler S."/>
            <person name="Tivey A."/>
            <person name="Sugano S."/>
            <person name="White B."/>
            <person name="Walker D."/>
            <person name="Woodward J.R."/>
            <person name="Winckler T."/>
            <person name="Tanaka Y."/>
            <person name="Shaulsky G."/>
            <person name="Schleicher M."/>
            <person name="Weinstock G.M."/>
            <person name="Rosenthal A."/>
            <person name="Cox E.C."/>
            <person name="Chisholm R.L."/>
            <person name="Gibbs R.A."/>
            <person name="Loomis W.F."/>
            <person name="Platzer M."/>
            <person name="Kay R.R."/>
            <person name="Williams J.G."/>
            <person name="Dear P.H."/>
            <person name="Noegel A.A."/>
            <person name="Barrell B.G."/>
            <person name="Kuspa A."/>
        </authorList>
    </citation>
    <scope>NUCLEOTIDE SEQUENCE [LARGE SCALE GENOMIC DNA]</scope>
    <source>
        <strain>AX4</strain>
    </source>
</reference>
<accession>Q54W19</accession>
<dbReference type="EMBL" id="AAFI02000035">
    <property type="protein sequence ID" value="EAL67430.1"/>
    <property type="molecule type" value="Genomic_DNA"/>
</dbReference>
<dbReference type="RefSeq" id="XP_641431.1">
    <property type="nucleotide sequence ID" value="XM_636339.1"/>
</dbReference>
<dbReference type="SMR" id="Q54W19"/>
<dbReference type="FunCoup" id="Q54W19">
    <property type="interactions" value="37"/>
</dbReference>
<dbReference type="STRING" id="44689.Q54W19"/>
<dbReference type="PaxDb" id="44689-DDB0215371"/>
<dbReference type="EnsemblProtists" id="EAL67430">
    <property type="protein sequence ID" value="EAL67430"/>
    <property type="gene ID" value="DDB_G0279917"/>
</dbReference>
<dbReference type="GeneID" id="8622316"/>
<dbReference type="KEGG" id="ddi:DDB_G0279917"/>
<dbReference type="dictyBase" id="DDB_G0279917">
    <property type="gene designation" value="abcD1"/>
</dbReference>
<dbReference type="VEuPathDB" id="AmoebaDB:DDB_G0279917"/>
<dbReference type="eggNOG" id="KOG0060">
    <property type="taxonomic scope" value="Eukaryota"/>
</dbReference>
<dbReference type="HOGENOM" id="CLU_007587_7_0_1"/>
<dbReference type="InParanoid" id="Q54W19"/>
<dbReference type="OMA" id="RESSANH"/>
<dbReference type="PhylomeDB" id="Q54W19"/>
<dbReference type="Reactome" id="R-DDI-1369062">
    <property type="pathway name" value="ABC transporters in lipid homeostasis"/>
</dbReference>
<dbReference type="Reactome" id="R-DDI-9603798">
    <property type="pathway name" value="Class I peroxisomal membrane protein import"/>
</dbReference>
<dbReference type="Reactome" id="R-DDI-9758881">
    <property type="pathway name" value="Uptake of dietary cobalamins into enterocytes"/>
</dbReference>
<dbReference type="Reactome" id="R-DDI-9758890">
    <property type="pathway name" value="Transport of RCbl within the body"/>
</dbReference>
<dbReference type="PRO" id="PR:Q54W19"/>
<dbReference type="Proteomes" id="UP000002195">
    <property type="component" value="Chromosome 3"/>
</dbReference>
<dbReference type="GO" id="GO:0043190">
    <property type="term" value="C:ATP-binding cassette (ABC) transporter complex"/>
    <property type="evidence" value="ECO:0000317"/>
    <property type="project" value="dictyBase"/>
</dbReference>
<dbReference type="GO" id="GO:0005778">
    <property type="term" value="C:peroxisomal membrane"/>
    <property type="evidence" value="ECO:0000318"/>
    <property type="project" value="GO_Central"/>
</dbReference>
<dbReference type="GO" id="GO:0005777">
    <property type="term" value="C:peroxisome"/>
    <property type="evidence" value="ECO:0000250"/>
    <property type="project" value="UniProtKB"/>
</dbReference>
<dbReference type="GO" id="GO:0140359">
    <property type="term" value="F:ABC-type transporter activity"/>
    <property type="evidence" value="ECO:0007669"/>
    <property type="project" value="InterPro"/>
</dbReference>
<dbReference type="GO" id="GO:0005524">
    <property type="term" value="F:ATP binding"/>
    <property type="evidence" value="ECO:0000318"/>
    <property type="project" value="GO_Central"/>
</dbReference>
<dbReference type="GO" id="GO:0016887">
    <property type="term" value="F:ATP hydrolysis activity"/>
    <property type="evidence" value="ECO:0007669"/>
    <property type="project" value="InterPro"/>
</dbReference>
<dbReference type="GO" id="GO:0042626">
    <property type="term" value="F:ATPase-coupled transmembrane transporter activity"/>
    <property type="evidence" value="ECO:0000318"/>
    <property type="project" value="GO_Central"/>
</dbReference>
<dbReference type="GO" id="GO:0005324">
    <property type="term" value="F:long-chain fatty acid transmembrane transporter activity"/>
    <property type="evidence" value="ECO:0000250"/>
    <property type="project" value="UniProtKB"/>
</dbReference>
<dbReference type="GO" id="GO:0006635">
    <property type="term" value="P:fatty acid beta-oxidation"/>
    <property type="evidence" value="ECO:0000250"/>
    <property type="project" value="UniProtKB"/>
</dbReference>
<dbReference type="GO" id="GO:0015910">
    <property type="term" value="P:long-chain fatty acid import into peroxisome"/>
    <property type="evidence" value="ECO:0000250"/>
    <property type="project" value="UniProtKB"/>
</dbReference>
<dbReference type="GO" id="GO:0007031">
    <property type="term" value="P:peroxisome organization"/>
    <property type="evidence" value="ECO:0000318"/>
    <property type="project" value="GO_Central"/>
</dbReference>
<dbReference type="GO" id="GO:0042760">
    <property type="term" value="P:very long-chain fatty acid catabolic process"/>
    <property type="evidence" value="ECO:0000318"/>
    <property type="project" value="GO_Central"/>
</dbReference>
<dbReference type="CDD" id="cd03223">
    <property type="entry name" value="ABCD_peroxisomal_ALDP"/>
    <property type="match status" value="1"/>
</dbReference>
<dbReference type="FunFam" id="1.20.1560.10:FF:000460">
    <property type="entry name" value="ABC transporter D family member 1"/>
    <property type="match status" value="1"/>
</dbReference>
<dbReference type="FunFam" id="3.40.50.300:FF:005829">
    <property type="entry name" value="ABC transporter D family member 3"/>
    <property type="match status" value="1"/>
</dbReference>
<dbReference type="Gene3D" id="1.20.1560.10">
    <property type="entry name" value="ABC transporter type 1, transmembrane domain"/>
    <property type="match status" value="1"/>
</dbReference>
<dbReference type="Gene3D" id="3.40.50.300">
    <property type="entry name" value="P-loop containing nucleotide triphosphate hydrolases"/>
    <property type="match status" value="1"/>
</dbReference>
<dbReference type="InterPro" id="IPR003593">
    <property type="entry name" value="AAA+_ATPase"/>
</dbReference>
<dbReference type="InterPro" id="IPR011527">
    <property type="entry name" value="ABC1_TM_dom"/>
</dbReference>
<dbReference type="InterPro" id="IPR036640">
    <property type="entry name" value="ABC1_TM_sf"/>
</dbReference>
<dbReference type="InterPro" id="IPR003439">
    <property type="entry name" value="ABC_transporter-like_ATP-bd"/>
</dbReference>
<dbReference type="InterPro" id="IPR017871">
    <property type="entry name" value="ABC_transporter-like_CS"/>
</dbReference>
<dbReference type="InterPro" id="IPR050835">
    <property type="entry name" value="ABC_transporter_sub-D"/>
</dbReference>
<dbReference type="InterPro" id="IPR027417">
    <property type="entry name" value="P-loop_NTPase"/>
</dbReference>
<dbReference type="PANTHER" id="PTHR11384">
    <property type="entry name" value="ATP-BINDING CASSETTE, SUB-FAMILY D MEMBER"/>
    <property type="match status" value="1"/>
</dbReference>
<dbReference type="PANTHER" id="PTHR11384:SF59">
    <property type="entry name" value="LYSOSOMAL COBALAMIN TRANSPORTER ABCD4"/>
    <property type="match status" value="1"/>
</dbReference>
<dbReference type="Pfam" id="PF06472">
    <property type="entry name" value="ABC_membrane_2"/>
    <property type="match status" value="1"/>
</dbReference>
<dbReference type="Pfam" id="PF00005">
    <property type="entry name" value="ABC_tran"/>
    <property type="match status" value="1"/>
</dbReference>
<dbReference type="SMART" id="SM00382">
    <property type="entry name" value="AAA"/>
    <property type="match status" value="1"/>
</dbReference>
<dbReference type="SUPFAM" id="SSF90123">
    <property type="entry name" value="ABC transporter transmembrane region"/>
    <property type="match status" value="1"/>
</dbReference>
<dbReference type="SUPFAM" id="SSF52540">
    <property type="entry name" value="P-loop containing nucleoside triphosphate hydrolases"/>
    <property type="match status" value="1"/>
</dbReference>
<dbReference type="PROSITE" id="PS50929">
    <property type="entry name" value="ABC_TM1F"/>
    <property type="match status" value="1"/>
</dbReference>
<dbReference type="PROSITE" id="PS00211">
    <property type="entry name" value="ABC_TRANSPORTER_1"/>
    <property type="match status" value="1"/>
</dbReference>
<dbReference type="PROSITE" id="PS50893">
    <property type="entry name" value="ABC_TRANSPORTER_2"/>
    <property type="match status" value="1"/>
</dbReference>
<organism>
    <name type="scientific">Dictyostelium discoideum</name>
    <name type="common">Social amoeba</name>
    <dbReference type="NCBI Taxonomy" id="44689"/>
    <lineage>
        <taxon>Eukaryota</taxon>
        <taxon>Amoebozoa</taxon>
        <taxon>Evosea</taxon>
        <taxon>Eumycetozoa</taxon>
        <taxon>Dictyostelia</taxon>
        <taxon>Dictyosteliales</taxon>
        <taxon>Dictyosteliaceae</taxon>
        <taxon>Dictyostelium</taxon>
    </lineage>
</organism>
<comment type="catalytic activity">
    <reaction evidence="1">
        <text>(9Z)-octadecenoyl-CoA(in) = (9Z)-octadecenoyl-CoA(out)</text>
        <dbReference type="Rhea" id="RHEA:45956"/>
        <dbReference type="ChEBI" id="CHEBI:57387"/>
    </reaction>
    <physiologicalReaction direction="right-to-left" evidence="1">
        <dbReference type="Rhea" id="RHEA:45958"/>
    </physiologicalReaction>
</comment>
<comment type="subcellular location">
    <subcellularLocation>
        <location evidence="4">Membrane</location>
        <topology evidence="4">Multi-pass membrane protein</topology>
    </subcellularLocation>
</comment>
<comment type="similarity">
    <text evidence="6">Belongs to the ABC transporter superfamily. ABCD family. Peroxisomal fatty acyl CoA transporter (TC 3.A.1.203) subfamily.</text>
</comment>
<protein>
    <recommendedName>
        <fullName>ABC transporter D family member 1</fullName>
    </recommendedName>
    <alternativeName>
        <fullName>ABC transporter ABCD.1</fullName>
    </alternativeName>
</protein>
<feature type="chain" id="PRO_0000370849" description="ABC transporter D family member 1">
    <location>
        <begin position="1"/>
        <end position="734"/>
    </location>
</feature>
<feature type="transmembrane region" description="Helical" evidence="4">
    <location>
        <begin position="52"/>
        <end position="72"/>
    </location>
</feature>
<feature type="transmembrane region" description="Helical" evidence="4">
    <location>
        <begin position="112"/>
        <end position="132"/>
    </location>
</feature>
<feature type="transmembrane region" description="Helical" evidence="4">
    <location>
        <begin position="177"/>
        <end position="197"/>
    </location>
</feature>
<feature type="transmembrane region" description="Helical" evidence="4">
    <location>
        <begin position="204"/>
        <end position="224"/>
    </location>
</feature>
<feature type="transmembrane region" description="Helical" evidence="4">
    <location>
        <begin position="374"/>
        <end position="394"/>
    </location>
</feature>
<feature type="domain" description="ABC transmembrane type-1" evidence="4">
    <location>
        <begin position="63"/>
        <end position="351"/>
    </location>
</feature>
<feature type="domain" description="ABC transporter" evidence="3">
    <location>
        <begin position="492"/>
        <end position="729"/>
    </location>
</feature>
<feature type="region of interest" description="Disordered" evidence="5">
    <location>
        <begin position="271"/>
        <end position="296"/>
    </location>
</feature>
<feature type="region of interest" description="Disordered" evidence="5">
    <location>
        <begin position="712"/>
        <end position="734"/>
    </location>
</feature>
<feature type="coiled-coil region" evidence="2">
    <location>
        <begin position="332"/>
        <end position="359"/>
    </location>
</feature>
<feature type="compositionally biased region" description="Basic and acidic residues" evidence="5">
    <location>
        <begin position="271"/>
        <end position="286"/>
    </location>
</feature>
<feature type="compositionally biased region" description="Low complexity" evidence="5">
    <location>
        <begin position="712"/>
        <end position="725"/>
    </location>
</feature>
<feature type="binding site" evidence="3">
    <location>
        <begin position="525"/>
        <end position="532"/>
    </location>
    <ligand>
        <name>ATP</name>
        <dbReference type="ChEBI" id="CHEBI:30616"/>
    </ligand>
</feature>
<evidence type="ECO:0000250" key="1">
    <source>
        <dbReference type="UniProtKB" id="P33897"/>
    </source>
</evidence>
<evidence type="ECO:0000255" key="2"/>
<evidence type="ECO:0000255" key="3">
    <source>
        <dbReference type="PROSITE-ProRule" id="PRU00434"/>
    </source>
</evidence>
<evidence type="ECO:0000255" key="4">
    <source>
        <dbReference type="PROSITE-ProRule" id="PRU00441"/>
    </source>
</evidence>
<evidence type="ECO:0000256" key="5">
    <source>
        <dbReference type="SAM" id="MobiDB-lite"/>
    </source>
</evidence>
<evidence type="ECO:0000305" key="6"/>
<name>ABCD1_DICDI</name>
<keyword id="KW-0067">ATP-binding</keyword>
<keyword id="KW-0175">Coiled coil</keyword>
<keyword id="KW-0472">Membrane</keyword>
<keyword id="KW-0547">Nucleotide-binding</keyword>
<keyword id="KW-1185">Reference proteome</keyword>
<keyword id="KW-0812">Transmembrane</keyword>
<keyword id="KW-1133">Transmembrane helix</keyword>
<keyword id="KW-0813">Transport</keyword>